<organism>
    <name type="scientific">Aliivibrio fischeri (strain MJ11)</name>
    <name type="common">Vibrio fischeri</name>
    <dbReference type="NCBI Taxonomy" id="388396"/>
    <lineage>
        <taxon>Bacteria</taxon>
        <taxon>Pseudomonadati</taxon>
        <taxon>Pseudomonadota</taxon>
        <taxon>Gammaproteobacteria</taxon>
        <taxon>Vibrionales</taxon>
        <taxon>Vibrionaceae</taxon>
        <taxon>Aliivibrio</taxon>
    </lineage>
</organism>
<keyword id="KW-0004">4Fe-4S</keyword>
<keyword id="KW-0997">Cell inner membrane</keyword>
<keyword id="KW-1003">Cell membrane</keyword>
<keyword id="KW-0249">Electron transport</keyword>
<keyword id="KW-0408">Iron</keyword>
<keyword id="KW-0411">Iron-sulfur</keyword>
<keyword id="KW-0472">Membrane</keyword>
<keyword id="KW-0479">Metal-binding</keyword>
<keyword id="KW-0677">Repeat</keyword>
<keyword id="KW-1278">Translocase</keyword>
<keyword id="KW-0813">Transport</keyword>
<name>RNFB_ALIFM</name>
<dbReference type="EC" id="7.-.-.-" evidence="1"/>
<dbReference type="EMBL" id="CP001139">
    <property type="protein sequence ID" value="ACH65814.1"/>
    <property type="molecule type" value="Genomic_DNA"/>
</dbReference>
<dbReference type="RefSeq" id="WP_005418571.1">
    <property type="nucleotide sequence ID" value="NC_011184.1"/>
</dbReference>
<dbReference type="GeneID" id="54163602"/>
<dbReference type="KEGG" id="vfm:VFMJ11_0973"/>
<dbReference type="HOGENOM" id="CLU_063448_2_0_6"/>
<dbReference type="Proteomes" id="UP000001857">
    <property type="component" value="Chromosome I"/>
</dbReference>
<dbReference type="GO" id="GO:0005886">
    <property type="term" value="C:plasma membrane"/>
    <property type="evidence" value="ECO:0007669"/>
    <property type="project" value="UniProtKB-SubCell"/>
</dbReference>
<dbReference type="GO" id="GO:0051539">
    <property type="term" value="F:4 iron, 4 sulfur cluster binding"/>
    <property type="evidence" value="ECO:0007669"/>
    <property type="project" value="UniProtKB-UniRule"/>
</dbReference>
<dbReference type="GO" id="GO:0009055">
    <property type="term" value="F:electron transfer activity"/>
    <property type="evidence" value="ECO:0007669"/>
    <property type="project" value="InterPro"/>
</dbReference>
<dbReference type="GO" id="GO:0046872">
    <property type="term" value="F:metal ion binding"/>
    <property type="evidence" value="ECO:0007669"/>
    <property type="project" value="UniProtKB-KW"/>
</dbReference>
<dbReference type="GO" id="GO:0022900">
    <property type="term" value="P:electron transport chain"/>
    <property type="evidence" value="ECO:0007669"/>
    <property type="project" value="UniProtKB-UniRule"/>
</dbReference>
<dbReference type="FunFam" id="1.10.15.40:FF:000001">
    <property type="entry name" value="Ion-translocating oxidoreductase complex subunit B"/>
    <property type="match status" value="1"/>
</dbReference>
<dbReference type="Gene3D" id="3.30.70.20">
    <property type="match status" value="2"/>
</dbReference>
<dbReference type="Gene3D" id="1.10.15.40">
    <property type="entry name" value="Electron transport complex subunit B, putative Fe-S cluster"/>
    <property type="match status" value="1"/>
</dbReference>
<dbReference type="HAMAP" id="MF_00463">
    <property type="entry name" value="RsxB_RnfB"/>
    <property type="match status" value="1"/>
</dbReference>
<dbReference type="InterPro" id="IPR007202">
    <property type="entry name" value="4Fe-4S_dom"/>
</dbReference>
<dbReference type="InterPro" id="IPR017896">
    <property type="entry name" value="4Fe4S_Fe-S-bd"/>
</dbReference>
<dbReference type="InterPro" id="IPR017900">
    <property type="entry name" value="4Fe4S_Fe_S_CS"/>
</dbReference>
<dbReference type="InterPro" id="IPR010207">
    <property type="entry name" value="Elect_transpt_cplx_RnfB/RsxB"/>
</dbReference>
<dbReference type="InterPro" id="IPR016463">
    <property type="entry name" value="RnfB/RsxB_Proteobac"/>
</dbReference>
<dbReference type="InterPro" id="IPR050294">
    <property type="entry name" value="RnfB_subfamily"/>
</dbReference>
<dbReference type="NCBIfam" id="NF003475">
    <property type="entry name" value="PRK05113.1"/>
    <property type="match status" value="1"/>
</dbReference>
<dbReference type="NCBIfam" id="TIGR01944">
    <property type="entry name" value="rnfB"/>
    <property type="match status" value="1"/>
</dbReference>
<dbReference type="PANTHER" id="PTHR42859:SF3">
    <property type="entry name" value="ION-TRANSLOCATING OXIDOREDUCTASE COMPLEX SUBUNIT B"/>
    <property type="match status" value="1"/>
</dbReference>
<dbReference type="PANTHER" id="PTHR42859">
    <property type="entry name" value="OXIDOREDUCTASE"/>
    <property type="match status" value="1"/>
</dbReference>
<dbReference type="Pfam" id="PF14697">
    <property type="entry name" value="Fer4_21"/>
    <property type="match status" value="1"/>
</dbReference>
<dbReference type="Pfam" id="PF04060">
    <property type="entry name" value="FeS"/>
    <property type="match status" value="1"/>
</dbReference>
<dbReference type="PIRSF" id="PIRSF005784">
    <property type="entry name" value="Elect_transpt_RnfB"/>
    <property type="match status" value="1"/>
</dbReference>
<dbReference type="SUPFAM" id="SSF54862">
    <property type="entry name" value="4Fe-4S ferredoxins"/>
    <property type="match status" value="1"/>
</dbReference>
<dbReference type="PROSITE" id="PS51656">
    <property type="entry name" value="4FE4S"/>
    <property type="match status" value="1"/>
</dbReference>
<dbReference type="PROSITE" id="PS00198">
    <property type="entry name" value="4FE4S_FER_1"/>
    <property type="match status" value="2"/>
</dbReference>
<dbReference type="PROSITE" id="PS51379">
    <property type="entry name" value="4FE4S_FER_2"/>
    <property type="match status" value="2"/>
</dbReference>
<evidence type="ECO:0000255" key="1">
    <source>
        <dbReference type="HAMAP-Rule" id="MF_00463"/>
    </source>
</evidence>
<gene>
    <name evidence="1" type="primary">rnfB</name>
    <name type="ordered locus">VFMJ11_0973</name>
</gene>
<reference key="1">
    <citation type="submission" date="2008-08" db="EMBL/GenBank/DDBJ databases">
        <title>Complete sequence of Vibrio fischeri strain MJ11.</title>
        <authorList>
            <person name="Mandel M.J."/>
            <person name="Stabb E.V."/>
            <person name="Ruby E.G."/>
            <person name="Ferriera S."/>
            <person name="Johnson J."/>
            <person name="Kravitz S."/>
            <person name="Beeson K."/>
            <person name="Sutton G."/>
            <person name="Rogers Y.-H."/>
            <person name="Friedman R."/>
            <person name="Frazier M."/>
            <person name="Venter J.C."/>
        </authorList>
    </citation>
    <scope>NUCLEOTIDE SEQUENCE [LARGE SCALE GENOMIC DNA]</scope>
    <source>
        <strain>MJ11</strain>
    </source>
</reference>
<comment type="function">
    <text evidence="1">Part of a membrane-bound complex that couples electron transfer with translocation of ions across the membrane.</text>
</comment>
<comment type="cofactor">
    <cofactor evidence="1">
        <name>[4Fe-4S] cluster</name>
        <dbReference type="ChEBI" id="CHEBI:49883"/>
    </cofactor>
    <text evidence="1">Binds 3 [4Fe-4S] clusters.</text>
</comment>
<comment type="subunit">
    <text evidence="1">The complex is composed of six subunits: RnfA, RnfB, RnfC, RnfD, RnfE and RnfG.</text>
</comment>
<comment type="subcellular location">
    <subcellularLocation>
        <location evidence="1">Cell inner membrane</location>
    </subcellularLocation>
</comment>
<comment type="similarity">
    <text evidence="1">Belongs to the 4Fe4S bacterial-type ferredoxin family. RnfB subfamily.</text>
</comment>
<sequence length="194" mass="20537">MSSILIAVIAIAALALVFGLILGFASIKFKVESDPIVEQIDAILPQTQCGQCGYPGCKPYAEAIANGDMINKCPPGGQATIEKLADLMGVDVPSSAHDEEKSIKKVAFIHEDMCIGCTKCIQACPVDAIVGGTKALHTVIESECTGCDLCVAPCPTDCIEMIPVKTTPDNWKWDLNTIPVVNISTDQPSKSSEL</sequence>
<proteinExistence type="inferred from homology"/>
<accession>B5FCN4</accession>
<protein>
    <recommendedName>
        <fullName evidence="1">Ion-translocating oxidoreductase complex subunit B</fullName>
        <ecNumber evidence="1">7.-.-.-</ecNumber>
    </recommendedName>
    <alternativeName>
        <fullName evidence="1">Rnf electron transport complex subunit B</fullName>
    </alternativeName>
</protein>
<feature type="chain" id="PRO_1000194503" description="Ion-translocating oxidoreductase complex subunit B">
    <location>
        <begin position="1"/>
        <end position="194"/>
    </location>
</feature>
<feature type="domain" description="4Fe-4S" evidence="1">
    <location>
        <begin position="32"/>
        <end position="90"/>
    </location>
</feature>
<feature type="domain" description="4Fe-4S ferredoxin-type 1" evidence="1">
    <location>
        <begin position="105"/>
        <end position="134"/>
    </location>
</feature>
<feature type="domain" description="4Fe-4S ferredoxin-type 2" evidence="1">
    <location>
        <begin position="135"/>
        <end position="164"/>
    </location>
</feature>
<feature type="region of interest" description="Hydrophobic" evidence="1">
    <location>
        <begin position="1"/>
        <end position="26"/>
    </location>
</feature>
<feature type="binding site" evidence="1">
    <location>
        <position position="49"/>
    </location>
    <ligand>
        <name>[4Fe-4S] cluster</name>
        <dbReference type="ChEBI" id="CHEBI:49883"/>
        <label>1</label>
    </ligand>
</feature>
<feature type="binding site" evidence="1">
    <location>
        <position position="52"/>
    </location>
    <ligand>
        <name>[4Fe-4S] cluster</name>
        <dbReference type="ChEBI" id="CHEBI:49883"/>
        <label>1</label>
    </ligand>
</feature>
<feature type="binding site" evidence="1">
    <location>
        <position position="57"/>
    </location>
    <ligand>
        <name>[4Fe-4S] cluster</name>
        <dbReference type="ChEBI" id="CHEBI:49883"/>
        <label>1</label>
    </ligand>
</feature>
<feature type="binding site" evidence="1">
    <location>
        <position position="73"/>
    </location>
    <ligand>
        <name>[4Fe-4S] cluster</name>
        <dbReference type="ChEBI" id="CHEBI:49883"/>
        <label>1</label>
    </ligand>
</feature>
<feature type="binding site" evidence="1">
    <location>
        <position position="114"/>
    </location>
    <ligand>
        <name>[4Fe-4S] cluster</name>
        <dbReference type="ChEBI" id="CHEBI:49883"/>
        <label>2</label>
    </ligand>
</feature>
<feature type="binding site" evidence="1">
    <location>
        <position position="117"/>
    </location>
    <ligand>
        <name>[4Fe-4S] cluster</name>
        <dbReference type="ChEBI" id="CHEBI:49883"/>
        <label>2</label>
    </ligand>
</feature>
<feature type="binding site" evidence="1">
    <location>
        <position position="120"/>
    </location>
    <ligand>
        <name>[4Fe-4S] cluster</name>
        <dbReference type="ChEBI" id="CHEBI:49883"/>
        <label>2</label>
    </ligand>
</feature>
<feature type="binding site" evidence="1">
    <location>
        <position position="124"/>
    </location>
    <ligand>
        <name>[4Fe-4S] cluster</name>
        <dbReference type="ChEBI" id="CHEBI:49883"/>
        <label>3</label>
    </ligand>
</feature>
<feature type="binding site" evidence="1">
    <location>
        <position position="144"/>
    </location>
    <ligand>
        <name>[4Fe-4S] cluster</name>
        <dbReference type="ChEBI" id="CHEBI:49883"/>
        <label>3</label>
    </ligand>
</feature>
<feature type="binding site" evidence="1">
    <location>
        <position position="147"/>
    </location>
    <ligand>
        <name>[4Fe-4S] cluster</name>
        <dbReference type="ChEBI" id="CHEBI:49883"/>
        <label>3</label>
    </ligand>
</feature>
<feature type="binding site" evidence="1">
    <location>
        <position position="150"/>
    </location>
    <ligand>
        <name>[4Fe-4S] cluster</name>
        <dbReference type="ChEBI" id="CHEBI:49883"/>
        <label>3</label>
    </ligand>
</feature>
<feature type="binding site" evidence="1">
    <location>
        <position position="154"/>
    </location>
    <ligand>
        <name>[4Fe-4S] cluster</name>
        <dbReference type="ChEBI" id="CHEBI:49883"/>
        <label>2</label>
    </ligand>
</feature>